<dbReference type="EC" id="7.1.2.2" evidence="1"/>
<dbReference type="EMBL" id="AE016822">
    <property type="protein sequence ID" value="AAT88637.1"/>
    <property type="molecule type" value="Genomic_DNA"/>
</dbReference>
<dbReference type="RefSeq" id="WP_011185636.1">
    <property type="nucleotide sequence ID" value="NC_006087.1"/>
</dbReference>
<dbReference type="SMR" id="Q6AG58"/>
<dbReference type="STRING" id="281090.Lxx07050"/>
<dbReference type="KEGG" id="lxx:Lxx07050"/>
<dbReference type="eggNOG" id="COG0055">
    <property type="taxonomic scope" value="Bacteria"/>
</dbReference>
<dbReference type="HOGENOM" id="CLU_022398_0_2_11"/>
<dbReference type="Proteomes" id="UP000001306">
    <property type="component" value="Chromosome"/>
</dbReference>
<dbReference type="GO" id="GO:0005886">
    <property type="term" value="C:plasma membrane"/>
    <property type="evidence" value="ECO:0007669"/>
    <property type="project" value="UniProtKB-SubCell"/>
</dbReference>
<dbReference type="GO" id="GO:0045259">
    <property type="term" value="C:proton-transporting ATP synthase complex"/>
    <property type="evidence" value="ECO:0007669"/>
    <property type="project" value="UniProtKB-KW"/>
</dbReference>
<dbReference type="GO" id="GO:0005524">
    <property type="term" value="F:ATP binding"/>
    <property type="evidence" value="ECO:0007669"/>
    <property type="project" value="UniProtKB-UniRule"/>
</dbReference>
<dbReference type="GO" id="GO:0016887">
    <property type="term" value="F:ATP hydrolysis activity"/>
    <property type="evidence" value="ECO:0007669"/>
    <property type="project" value="InterPro"/>
</dbReference>
<dbReference type="GO" id="GO:0046933">
    <property type="term" value="F:proton-transporting ATP synthase activity, rotational mechanism"/>
    <property type="evidence" value="ECO:0007669"/>
    <property type="project" value="UniProtKB-UniRule"/>
</dbReference>
<dbReference type="CDD" id="cd18110">
    <property type="entry name" value="ATP-synt_F1_beta_C"/>
    <property type="match status" value="1"/>
</dbReference>
<dbReference type="CDD" id="cd18115">
    <property type="entry name" value="ATP-synt_F1_beta_N"/>
    <property type="match status" value="1"/>
</dbReference>
<dbReference type="CDD" id="cd01133">
    <property type="entry name" value="F1-ATPase_beta_CD"/>
    <property type="match status" value="1"/>
</dbReference>
<dbReference type="FunFam" id="1.10.1140.10:FF:000005">
    <property type="entry name" value="ATP synthase subunit beta"/>
    <property type="match status" value="1"/>
</dbReference>
<dbReference type="FunFam" id="2.40.10.170:FF:000005">
    <property type="entry name" value="ATP synthase subunit beta"/>
    <property type="match status" value="1"/>
</dbReference>
<dbReference type="FunFam" id="3.40.50.300:FF:000004">
    <property type="entry name" value="ATP synthase subunit beta"/>
    <property type="match status" value="1"/>
</dbReference>
<dbReference type="Gene3D" id="2.40.10.170">
    <property type="match status" value="1"/>
</dbReference>
<dbReference type="Gene3D" id="1.10.1140.10">
    <property type="entry name" value="Bovine Mitochondrial F1-atpase, Atp Synthase Beta Chain, Chain D, domain 3"/>
    <property type="match status" value="1"/>
</dbReference>
<dbReference type="Gene3D" id="3.40.50.300">
    <property type="entry name" value="P-loop containing nucleotide triphosphate hydrolases"/>
    <property type="match status" value="1"/>
</dbReference>
<dbReference type="HAMAP" id="MF_01347">
    <property type="entry name" value="ATP_synth_beta_bact"/>
    <property type="match status" value="1"/>
</dbReference>
<dbReference type="InterPro" id="IPR003593">
    <property type="entry name" value="AAA+_ATPase"/>
</dbReference>
<dbReference type="InterPro" id="IPR055190">
    <property type="entry name" value="ATP-synt_VA_C"/>
</dbReference>
<dbReference type="InterPro" id="IPR005722">
    <property type="entry name" value="ATP_synth_F1_bsu"/>
</dbReference>
<dbReference type="InterPro" id="IPR020003">
    <property type="entry name" value="ATPase_a/bsu_AS"/>
</dbReference>
<dbReference type="InterPro" id="IPR050053">
    <property type="entry name" value="ATPase_alpha/beta_chains"/>
</dbReference>
<dbReference type="InterPro" id="IPR004100">
    <property type="entry name" value="ATPase_F1/V1/A1_a/bsu_N"/>
</dbReference>
<dbReference type="InterPro" id="IPR036121">
    <property type="entry name" value="ATPase_F1/V1/A1_a/bsu_N_sf"/>
</dbReference>
<dbReference type="InterPro" id="IPR000194">
    <property type="entry name" value="ATPase_F1/V1/A1_a/bsu_nucl-bd"/>
</dbReference>
<dbReference type="InterPro" id="IPR024034">
    <property type="entry name" value="ATPase_F1/V1_b/a_C"/>
</dbReference>
<dbReference type="InterPro" id="IPR027417">
    <property type="entry name" value="P-loop_NTPase"/>
</dbReference>
<dbReference type="NCBIfam" id="TIGR01039">
    <property type="entry name" value="atpD"/>
    <property type="match status" value="1"/>
</dbReference>
<dbReference type="PANTHER" id="PTHR15184">
    <property type="entry name" value="ATP SYNTHASE"/>
    <property type="match status" value="1"/>
</dbReference>
<dbReference type="PANTHER" id="PTHR15184:SF71">
    <property type="entry name" value="ATP SYNTHASE SUBUNIT BETA, MITOCHONDRIAL"/>
    <property type="match status" value="1"/>
</dbReference>
<dbReference type="Pfam" id="PF00006">
    <property type="entry name" value="ATP-synt_ab"/>
    <property type="match status" value="1"/>
</dbReference>
<dbReference type="Pfam" id="PF02874">
    <property type="entry name" value="ATP-synt_ab_N"/>
    <property type="match status" value="1"/>
</dbReference>
<dbReference type="Pfam" id="PF22919">
    <property type="entry name" value="ATP-synt_VA_C"/>
    <property type="match status" value="1"/>
</dbReference>
<dbReference type="SMART" id="SM00382">
    <property type="entry name" value="AAA"/>
    <property type="match status" value="1"/>
</dbReference>
<dbReference type="SUPFAM" id="SSF47917">
    <property type="entry name" value="C-terminal domain of alpha and beta subunits of F1 ATP synthase"/>
    <property type="match status" value="1"/>
</dbReference>
<dbReference type="SUPFAM" id="SSF50615">
    <property type="entry name" value="N-terminal domain of alpha and beta subunits of F1 ATP synthase"/>
    <property type="match status" value="1"/>
</dbReference>
<dbReference type="SUPFAM" id="SSF52540">
    <property type="entry name" value="P-loop containing nucleoside triphosphate hydrolases"/>
    <property type="match status" value="1"/>
</dbReference>
<dbReference type="PROSITE" id="PS00152">
    <property type="entry name" value="ATPASE_ALPHA_BETA"/>
    <property type="match status" value="1"/>
</dbReference>
<feature type="chain" id="PRO_0000254288" description="ATP synthase subunit beta">
    <location>
        <begin position="1"/>
        <end position="487"/>
    </location>
</feature>
<feature type="binding site" evidence="1">
    <location>
        <begin position="171"/>
        <end position="178"/>
    </location>
    <ligand>
        <name>ATP</name>
        <dbReference type="ChEBI" id="CHEBI:30616"/>
    </ligand>
</feature>
<protein>
    <recommendedName>
        <fullName evidence="1">ATP synthase subunit beta</fullName>
        <ecNumber evidence="1">7.1.2.2</ecNumber>
    </recommendedName>
    <alternativeName>
        <fullName evidence="1">ATP synthase F1 sector subunit beta</fullName>
    </alternativeName>
    <alternativeName>
        <fullName evidence="1">F-ATPase subunit beta</fullName>
    </alternativeName>
</protein>
<reference key="1">
    <citation type="journal article" date="2004" name="Mol. Plant Microbe Interact.">
        <title>The genome sequence of the Gram-positive sugarcane pathogen Leifsonia xyli subsp. xyli.</title>
        <authorList>
            <person name="Monteiro-Vitorello C.B."/>
            <person name="Camargo L.E.A."/>
            <person name="Van Sluys M.A."/>
            <person name="Kitajima J.P."/>
            <person name="Truffi D."/>
            <person name="do Amaral A.M."/>
            <person name="Harakava R."/>
            <person name="de Oliveira J.C.F."/>
            <person name="Wood D."/>
            <person name="de Oliveira M.C."/>
            <person name="Miyaki C.Y."/>
            <person name="Takita M.A."/>
            <person name="da Silva A.C.R."/>
            <person name="Furlan L.R."/>
            <person name="Carraro D.M."/>
            <person name="Camarotte G."/>
            <person name="Almeida N.F. Jr."/>
            <person name="Carrer H."/>
            <person name="Coutinho L.L."/>
            <person name="El-Dorry H.A."/>
            <person name="Ferro M.I.T."/>
            <person name="Gagliardi P.R."/>
            <person name="Giglioti E."/>
            <person name="Goldman M.H.S."/>
            <person name="Goldman G.H."/>
            <person name="Kimura E.T."/>
            <person name="Ferro E.S."/>
            <person name="Kuramae E.E."/>
            <person name="Lemos E.G.M."/>
            <person name="Lemos M.V.F."/>
            <person name="Mauro S.M.Z."/>
            <person name="Machado M.A."/>
            <person name="Marino C.L."/>
            <person name="Menck C.F."/>
            <person name="Nunes L.R."/>
            <person name="Oliveira R.C."/>
            <person name="Pereira G.G."/>
            <person name="Siqueira W."/>
            <person name="de Souza A.A."/>
            <person name="Tsai S.M."/>
            <person name="Zanca A.S."/>
            <person name="Simpson A.J.G."/>
            <person name="Brumbley S.M."/>
            <person name="Setubal J.C."/>
        </authorList>
    </citation>
    <scope>NUCLEOTIDE SEQUENCE [LARGE SCALE GENOMIC DNA]</scope>
    <source>
        <strain>CTCB07</strain>
    </source>
</reference>
<accession>Q6AG58</accession>
<proteinExistence type="inferred from homology"/>
<organism>
    <name type="scientific">Leifsonia xyli subsp. xyli (strain CTCB07)</name>
    <dbReference type="NCBI Taxonomy" id="281090"/>
    <lineage>
        <taxon>Bacteria</taxon>
        <taxon>Bacillati</taxon>
        <taxon>Actinomycetota</taxon>
        <taxon>Actinomycetes</taxon>
        <taxon>Micrococcales</taxon>
        <taxon>Microbacteriaceae</taxon>
        <taxon>Leifsonia</taxon>
    </lineage>
</organism>
<comment type="function">
    <text evidence="1">Produces ATP from ADP in the presence of a proton gradient across the membrane. The catalytic sites are hosted primarily by the beta subunits.</text>
</comment>
<comment type="catalytic activity">
    <reaction evidence="1">
        <text>ATP + H2O + 4 H(+)(in) = ADP + phosphate + 5 H(+)(out)</text>
        <dbReference type="Rhea" id="RHEA:57720"/>
        <dbReference type="ChEBI" id="CHEBI:15377"/>
        <dbReference type="ChEBI" id="CHEBI:15378"/>
        <dbReference type="ChEBI" id="CHEBI:30616"/>
        <dbReference type="ChEBI" id="CHEBI:43474"/>
        <dbReference type="ChEBI" id="CHEBI:456216"/>
        <dbReference type="EC" id="7.1.2.2"/>
    </reaction>
</comment>
<comment type="subunit">
    <text evidence="1">F-type ATPases have 2 components, CF(1) - the catalytic core - and CF(0) - the membrane proton channel. CF(1) has five subunits: alpha(3), beta(3), gamma(1), delta(1), epsilon(1). CF(0) has three main subunits: a(1), b(2) and c(9-12). The alpha and beta chains form an alternating ring which encloses part of the gamma chain. CF(1) is attached to CF(0) by a central stalk formed by the gamma and epsilon chains, while a peripheral stalk is formed by the delta and b chains.</text>
</comment>
<comment type="subcellular location">
    <subcellularLocation>
        <location evidence="1">Cell membrane</location>
        <topology evidence="1">Peripheral membrane protein</topology>
    </subcellularLocation>
</comment>
<comment type="similarity">
    <text evidence="1">Belongs to the ATPase alpha/beta chains family.</text>
</comment>
<gene>
    <name evidence="1" type="primary">atpD</name>
    <name type="ordered locus">Lxx07050</name>
</gene>
<keyword id="KW-0066">ATP synthesis</keyword>
<keyword id="KW-0067">ATP-binding</keyword>
<keyword id="KW-1003">Cell membrane</keyword>
<keyword id="KW-0139">CF(1)</keyword>
<keyword id="KW-0375">Hydrogen ion transport</keyword>
<keyword id="KW-0406">Ion transport</keyword>
<keyword id="KW-0472">Membrane</keyword>
<keyword id="KW-0547">Nucleotide-binding</keyword>
<keyword id="KW-1185">Reference proteome</keyword>
<keyword id="KW-1278">Translocase</keyword>
<keyword id="KW-0813">Transport</keyword>
<sequence length="487" mass="53006">MTTATAEAQASTAQPAGVGRIARVTGPVVDIEFPHDSIPGIYNALKTTITIGDRSTEITLEVAQHLGDDLVRAISLKPTDGLVRGGEVRDTGSLITVPVGDVTKGKVFDVTGEILNAEPGEKIEIAERWPIHRQPPSFDHLESKTQLFETGIKVIDLLTPYVQGGKIGLFGGAGVGKTVLIQEMVQRVAQDHGGVSVFAGVGERTREGNDLIHEMEEAGVFDKTALVFGQMDEPPGTRLRVALSALTMAEYFRDVQKQDVLLFIDNIFRFTQAGSEVSTLLGRMPSAVGYQPNLADEMGLLQERITSTRGHSITSLQAIYVPADDYTDPAPATTFAHLDATTELSREIASKGLYPAVDPLTSTSRILDPRYLGADHYRVATTVKQILQKNKELQEIIAILGVDELSEEDKITVSRARRIQQFLSQNTYMAKKFTGVEGSTVPLKETIESFDAIAKGEFDHVAEQAFFNVGALSDVEEKWAQIQKENG</sequence>
<evidence type="ECO:0000255" key="1">
    <source>
        <dbReference type="HAMAP-Rule" id="MF_01347"/>
    </source>
</evidence>
<name>ATPB_LEIXX</name>